<name>RS18_CLAM3</name>
<feature type="chain" id="PRO_1000003481" description="Small ribosomal subunit protein bS18">
    <location>
        <begin position="1"/>
        <end position="87"/>
    </location>
</feature>
<feature type="region of interest" description="Disordered" evidence="2">
    <location>
        <begin position="1"/>
        <end position="23"/>
    </location>
</feature>
<feature type="compositionally biased region" description="Basic and acidic residues" evidence="2">
    <location>
        <begin position="1"/>
        <end position="10"/>
    </location>
</feature>
<sequence>MAGKSSGDRRKPLRGAKGGKNAAPAKSIRVGVIDYKDVATLRKFISERGKIRARRITGVSVQEQRLIARAVKNAREMALLPYAGSGR</sequence>
<proteinExistence type="inferred from homology"/>
<reference key="1">
    <citation type="journal article" date="2008" name="J. Bacteriol.">
        <title>The genome sequence of the tomato-pathogenic actinomycete Clavibacter michiganensis subsp. michiganensis NCPPB382 reveals a large island involved in pathogenicity.</title>
        <authorList>
            <person name="Gartemann K.-H."/>
            <person name="Abt B."/>
            <person name="Bekel T."/>
            <person name="Burger A."/>
            <person name="Engemann J."/>
            <person name="Fluegel M."/>
            <person name="Gaigalat L."/>
            <person name="Goesmann A."/>
            <person name="Graefen I."/>
            <person name="Kalinowski J."/>
            <person name="Kaup O."/>
            <person name="Kirchner O."/>
            <person name="Krause L."/>
            <person name="Linke B."/>
            <person name="McHardy A."/>
            <person name="Meyer F."/>
            <person name="Pohle S."/>
            <person name="Rueckert C."/>
            <person name="Schneiker S."/>
            <person name="Zellermann E.-M."/>
            <person name="Puehler A."/>
            <person name="Eichenlaub R."/>
            <person name="Kaiser O."/>
            <person name="Bartels D."/>
        </authorList>
    </citation>
    <scope>NUCLEOTIDE SEQUENCE [LARGE SCALE GENOMIC DNA]</scope>
    <source>
        <strain>NCPPB 382</strain>
    </source>
</reference>
<keyword id="KW-0687">Ribonucleoprotein</keyword>
<keyword id="KW-0689">Ribosomal protein</keyword>
<keyword id="KW-0694">RNA-binding</keyword>
<keyword id="KW-0699">rRNA-binding</keyword>
<organism>
    <name type="scientific">Clavibacter michiganensis subsp. michiganensis (strain NCPPB 382)</name>
    <dbReference type="NCBI Taxonomy" id="443906"/>
    <lineage>
        <taxon>Bacteria</taxon>
        <taxon>Bacillati</taxon>
        <taxon>Actinomycetota</taxon>
        <taxon>Actinomycetes</taxon>
        <taxon>Micrococcales</taxon>
        <taxon>Microbacteriaceae</taxon>
        <taxon>Clavibacter</taxon>
    </lineage>
</organism>
<accession>A5CVA9</accession>
<evidence type="ECO:0000255" key="1">
    <source>
        <dbReference type="HAMAP-Rule" id="MF_00270"/>
    </source>
</evidence>
<evidence type="ECO:0000256" key="2">
    <source>
        <dbReference type="SAM" id="MobiDB-lite"/>
    </source>
</evidence>
<evidence type="ECO:0000305" key="3"/>
<gene>
    <name evidence="1" type="primary">rpsR</name>
    <name type="ordered locus">CMM_2961</name>
</gene>
<protein>
    <recommendedName>
        <fullName evidence="1">Small ribosomal subunit protein bS18</fullName>
    </recommendedName>
    <alternativeName>
        <fullName evidence="3">30S ribosomal protein S18</fullName>
    </alternativeName>
</protein>
<dbReference type="EMBL" id="AM711867">
    <property type="protein sequence ID" value="CAN03048.1"/>
    <property type="molecule type" value="Genomic_DNA"/>
</dbReference>
<dbReference type="RefSeq" id="WP_012039648.1">
    <property type="nucleotide sequence ID" value="NC_009480.1"/>
</dbReference>
<dbReference type="SMR" id="A5CVA9"/>
<dbReference type="GeneID" id="92984663"/>
<dbReference type="KEGG" id="cmi:CMM_2961"/>
<dbReference type="eggNOG" id="COG0238">
    <property type="taxonomic scope" value="Bacteria"/>
</dbReference>
<dbReference type="HOGENOM" id="CLU_148710_1_0_11"/>
<dbReference type="OrthoDB" id="9812008at2"/>
<dbReference type="Proteomes" id="UP000001564">
    <property type="component" value="Chromosome"/>
</dbReference>
<dbReference type="GO" id="GO:0022627">
    <property type="term" value="C:cytosolic small ribosomal subunit"/>
    <property type="evidence" value="ECO:0007669"/>
    <property type="project" value="TreeGrafter"/>
</dbReference>
<dbReference type="GO" id="GO:0070181">
    <property type="term" value="F:small ribosomal subunit rRNA binding"/>
    <property type="evidence" value="ECO:0007669"/>
    <property type="project" value="TreeGrafter"/>
</dbReference>
<dbReference type="GO" id="GO:0003735">
    <property type="term" value="F:structural constituent of ribosome"/>
    <property type="evidence" value="ECO:0007669"/>
    <property type="project" value="InterPro"/>
</dbReference>
<dbReference type="GO" id="GO:0006412">
    <property type="term" value="P:translation"/>
    <property type="evidence" value="ECO:0007669"/>
    <property type="project" value="UniProtKB-UniRule"/>
</dbReference>
<dbReference type="Gene3D" id="4.10.640.10">
    <property type="entry name" value="Ribosomal protein S18"/>
    <property type="match status" value="1"/>
</dbReference>
<dbReference type="HAMAP" id="MF_00270">
    <property type="entry name" value="Ribosomal_bS18"/>
    <property type="match status" value="1"/>
</dbReference>
<dbReference type="InterPro" id="IPR001648">
    <property type="entry name" value="Ribosomal_bS18"/>
</dbReference>
<dbReference type="InterPro" id="IPR018275">
    <property type="entry name" value="Ribosomal_bS18_CS"/>
</dbReference>
<dbReference type="InterPro" id="IPR036870">
    <property type="entry name" value="Ribosomal_bS18_sf"/>
</dbReference>
<dbReference type="NCBIfam" id="TIGR00165">
    <property type="entry name" value="S18"/>
    <property type="match status" value="1"/>
</dbReference>
<dbReference type="PANTHER" id="PTHR13479">
    <property type="entry name" value="30S RIBOSOMAL PROTEIN S18"/>
    <property type="match status" value="1"/>
</dbReference>
<dbReference type="PANTHER" id="PTHR13479:SF40">
    <property type="entry name" value="SMALL RIBOSOMAL SUBUNIT PROTEIN BS18M"/>
    <property type="match status" value="1"/>
</dbReference>
<dbReference type="Pfam" id="PF01084">
    <property type="entry name" value="Ribosomal_S18"/>
    <property type="match status" value="1"/>
</dbReference>
<dbReference type="PRINTS" id="PR00974">
    <property type="entry name" value="RIBOSOMALS18"/>
</dbReference>
<dbReference type="SUPFAM" id="SSF46911">
    <property type="entry name" value="Ribosomal protein S18"/>
    <property type="match status" value="1"/>
</dbReference>
<dbReference type="PROSITE" id="PS00057">
    <property type="entry name" value="RIBOSOMAL_S18"/>
    <property type="match status" value="1"/>
</dbReference>
<comment type="function">
    <text evidence="1">Binds as a heterodimer with protein bS6 to the central domain of the 16S rRNA, where it helps stabilize the platform of the 30S subunit.</text>
</comment>
<comment type="subunit">
    <text evidence="1">Part of the 30S ribosomal subunit. Forms a tight heterodimer with protein bS6.</text>
</comment>
<comment type="similarity">
    <text evidence="1">Belongs to the bacterial ribosomal protein bS18 family.</text>
</comment>